<reference key="1">
    <citation type="journal article" date="2011" name="J. Bacteriol.">
        <title>Comparative genomics of 28 Salmonella enterica isolates: evidence for CRISPR-mediated adaptive sublineage evolution.</title>
        <authorList>
            <person name="Fricke W.F."/>
            <person name="Mammel M.K."/>
            <person name="McDermott P.F."/>
            <person name="Tartera C."/>
            <person name="White D.G."/>
            <person name="Leclerc J.E."/>
            <person name="Ravel J."/>
            <person name="Cebula T.A."/>
        </authorList>
    </citation>
    <scope>NUCLEOTIDE SEQUENCE [LARGE SCALE GENOMIC DNA]</scope>
    <source>
        <strain>CVM19633</strain>
    </source>
</reference>
<proteinExistence type="inferred from homology"/>
<sequence>MKVNLPAFERAGVMVVGDVMLDRYWYGPTCRISPEAPVPVVKVNTVEERPGGAANVAMNIASLGANARLVGLTGIDDAARALSKTLAEVNVKCDFVSVPTHPTITKLRVLSRNQQLIRLDFEEGFEGVDPQPLHERINQALGSIGALVLSDYAKGALTSVQTMISLARQAGVPVLIDPKGTDFERYRGATLLTPNLSEFEAVAGKCKSEDELVERGMKLIADYDLSALLVTRSEQGMTLLQPNKAPLHMPTQAQEVYDVTGAGDTVIGVLAATLAAGNTLEEACYFANAAAGVVVGKLGTSTVSPIELENAVRGRADTGFGVMTEEELRQAVASARKRGEKVVMTNGVFDILHAGHVSYLANARKLGDRLIVAVNSDASTKRLKGESRPVNPLEQRMIVLGALESVDWVVSFEEDTPQRLIAGILPDLLVKGGDYKPEEIAGSEEVWANGGEVMVLNFEDGCSTTNIIKKIQTESEK</sequence>
<dbReference type="EC" id="2.7.1.167" evidence="1"/>
<dbReference type="EC" id="2.7.7.70" evidence="1"/>
<dbReference type="EMBL" id="CP001127">
    <property type="protein sequence ID" value="ACF89334.1"/>
    <property type="molecule type" value="Genomic_DNA"/>
</dbReference>
<dbReference type="RefSeq" id="WP_000867682.1">
    <property type="nucleotide sequence ID" value="NC_011094.1"/>
</dbReference>
<dbReference type="SMR" id="B4TVT4"/>
<dbReference type="KEGG" id="sew:SeSA_A3390"/>
<dbReference type="HOGENOM" id="CLU_021150_2_1_6"/>
<dbReference type="UniPathway" id="UPA00356">
    <property type="reaction ID" value="UER00437"/>
</dbReference>
<dbReference type="UniPathway" id="UPA00356">
    <property type="reaction ID" value="UER00439"/>
</dbReference>
<dbReference type="Proteomes" id="UP000001865">
    <property type="component" value="Chromosome"/>
</dbReference>
<dbReference type="GO" id="GO:0005829">
    <property type="term" value="C:cytosol"/>
    <property type="evidence" value="ECO:0007669"/>
    <property type="project" value="TreeGrafter"/>
</dbReference>
<dbReference type="GO" id="GO:0005524">
    <property type="term" value="F:ATP binding"/>
    <property type="evidence" value="ECO:0007669"/>
    <property type="project" value="UniProtKB-UniRule"/>
</dbReference>
<dbReference type="GO" id="GO:0033785">
    <property type="term" value="F:heptose 7-phosphate kinase activity"/>
    <property type="evidence" value="ECO:0007669"/>
    <property type="project" value="UniProtKB-UniRule"/>
</dbReference>
<dbReference type="GO" id="GO:0033786">
    <property type="term" value="F:heptose-1-phosphate adenylyltransferase activity"/>
    <property type="evidence" value="ECO:0007669"/>
    <property type="project" value="UniProtKB-UniRule"/>
</dbReference>
<dbReference type="GO" id="GO:0016773">
    <property type="term" value="F:phosphotransferase activity, alcohol group as acceptor"/>
    <property type="evidence" value="ECO:0007669"/>
    <property type="project" value="InterPro"/>
</dbReference>
<dbReference type="GO" id="GO:0097171">
    <property type="term" value="P:ADP-L-glycero-beta-D-manno-heptose biosynthetic process"/>
    <property type="evidence" value="ECO:0007669"/>
    <property type="project" value="UniProtKB-UniPathway"/>
</dbReference>
<dbReference type="CDD" id="cd01172">
    <property type="entry name" value="RfaE_like"/>
    <property type="match status" value="1"/>
</dbReference>
<dbReference type="FunFam" id="3.40.1190.20:FF:000002">
    <property type="entry name" value="Bifunctional protein HldE"/>
    <property type="match status" value="1"/>
</dbReference>
<dbReference type="FunFam" id="3.40.50.620:FF:000028">
    <property type="entry name" value="Bifunctional protein HldE"/>
    <property type="match status" value="1"/>
</dbReference>
<dbReference type="Gene3D" id="3.40.1190.20">
    <property type="match status" value="1"/>
</dbReference>
<dbReference type="Gene3D" id="3.40.50.620">
    <property type="entry name" value="HUPs"/>
    <property type="match status" value="1"/>
</dbReference>
<dbReference type="HAMAP" id="MF_01603">
    <property type="entry name" value="HldE"/>
    <property type="match status" value="1"/>
</dbReference>
<dbReference type="InterPro" id="IPR023030">
    <property type="entry name" value="Bifunc_HldE"/>
</dbReference>
<dbReference type="InterPro" id="IPR002173">
    <property type="entry name" value="Carboh/pur_kinase_PfkB_CS"/>
</dbReference>
<dbReference type="InterPro" id="IPR004821">
    <property type="entry name" value="Cyt_trans-like"/>
</dbReference>
<dbReference type="InterPro" id="IPR011611">
    <property type="entry name" value="PfkB_dom"/>
</dbReference>
<dbReference type="InterPro" id="IPR011913">
    <property type="entry name" value="RfaE_dom_I"/>
</dbReference>
<dbReference type="InterPro" id="IPR011914">
    <property type="entry name" value="RfaE_dom_II"/>
</dbReference>
<dbReference type="InterPro" id="IPR029056">
    <property type="entry name" value="Ribokinase-like"/>
</dbReference>
<dbReference type="InterPro" id="IPR014729">
    <property type="entry name" value="Rossmann-like_a/b/a_fold"/>
</dbReference>
<dbReference type="NCBIfam" id="TIGR00125">
    <property type="entry name" value="cyt_tran_rel"/>
    <property type="match status" value="1"/>
</dbReference>
<dbReference type="NCBIfam" id="NF008454">
    <property type="entry name" value="PRK11316.1"/>
    <property type="match status" value="1"/>
</dbReference>
<dbReference type="NCBIfam" id="TIGR02198">
    <property type="entry name" value="rfaE_dom_I"/>
    <property type="match status" value="1"/>
</dbReference>
<dbReference type="NCBIfam" id="TIGR02199">
    <property type="entry name" value="rfaE_dom_II"/>
    <property type="match status" value="1"/>
</dbReference>
<dbReference type="PANTHER" id="PTHR46969">
    <property type="entry name" value="BIFUNCTIONAL PROTEIN HLDE"/>
    <property type="match status" value="1"/>
</dbReference>
<dbReference type="PANTHER" id="PTHR46969:SF1">
    <property type="entry name" value="BIFUNCTIONAL PROTEIN HLDE"/>
    <property type="match status" value="1"/>
</dbReference>
<dbReference type="Pfam" id="PF01467">
    <property type="entry name" value="CTP_transf_like"/>
    <property type="match status" value="1"/>
</dbReference>
<dbReference type="Pfam" id="PF00294">
    <property type="entry name" value="PfkB"/>
    <property type="match status" value="1"/>
</dbReference>
<dbReference type="SUPFAM" id="SSF52374">
    <property type="entry name" value="Nucleotidylyl transferase"/>
    <property type="match status" value="1"/>
</dbReference>
<dbReference type="SUPFAM" id="SSF53613">
    <property type="entry name" value="Ribokinase-like"/>
    <property type="match status" value="1"/>
</dbReference>
<dbReference type="PROSITE" id="PS00583">
    <property type="entry name" value="PFKB_KINASES_1"/>
    <property type="match status" value="1"/>
</dbReference>
<name>HLDE_SALSV</name>
<comment type="function">
    <text evidence="1">Catalyzes the phosphorylation of D-glycero-D-manno-heptose 7-phosphate at the C-1 position to selectively form D-glycero-beta-D-manno-heptose-1,7-bisphosphate.</text>
</comment>
<comment type="function">
    <text evidence="1">Catalyzes the ADP transfer from ATP to D-glycero-beta-D-manno-heptose 1-phosphate, yielding ADP-D-glycero-beta-D-manno-heptose.</text>
</comment>
<comment type="catalytic activity">
    <reaction evidence="1">
        <text>D-glycero-beta-D-manno-heptose 7-phosphate + ATP = D-glycero-beta-D-manno-heptose 1,7-bisphosphate + ADP + H(+)</text>
        <dbReference type="Rhea" id="RHEA:27473"/>
        <dbReference type="ChEBI" id="CHEBI:15378"/>
        <dbReference type="ChEBI" id="CHEBI:30616"/>
        <dbReference type="ChEBI" id="CHEBI:60204"/>
        <dbReference type="ChEBI" id="CHEBI:60208"/>
        <dbReference type="ChEBI" id="CHEBI:456216"/>
        <dbReference type="EC" id="2.7.1.167"/>
    </reaction>
</comment>
<comment type="catalytic activity">
    <reaction evidence="1">
        <text>D-glycero-beta-D-manno-heptose 1-phosphate + ATP + H(+) = ADP-D-glycero-beta-D-manno-heptose + diphosphate</text>
        <dbReference type="Rhea" id="RHEA:27465"/>
        <dbReference type="ChEBI" id="CHEBI:15378"/>
        <dbReference type="ChEBI" id="CHEBI:30616"/>
        <dbReference type="ChEBI" id="CHEBI:33019"/>
        <dbReference type="ChEBI" id="CHEBI:59967"/>
        <dbReference type="ChEBI" id="CHEBI:61593"/>
        <dbReference type="EC" id="2.7.7.70"/>
    </reaction>
</comment>
<comment type="pathway">
    <text evidence="1">Nucleotide-sugar biosynthesis; ADP-L-glycero-beta-D-manno-heptose biosynthesis; ADP-L-glycero-beta-D-manno-heptose from D-glycero-beta-D-manno-heptose 7-phosphate: step 1/4.</text>
</comment>
<comment type="pathway">
    <text evidence="1">Nucleotide-sugar biosynthesis; ADP-L-glycero-beta-D-manno-heptose biosynthesis; ADP-L-glycero-beta-D-manno-heptose from D-glycero-beta-D-manno-heptose 7-phosphate: step 3/4.</text>
</comment>
<comment type="subunit">
    <text evidence="1">Homodimer.</text>
</comment>
<comment type="similarity">
    <text evidence="1">In the N-terminal section; belongs to the carbohydrate kinase PfkB family.</text>
</comment>
<comment type="similarity">
    <text evidence="1">In the C-terminal section; belongs to the cytidylyltransferase family.</text>
</comment>
<accession>B4TVT4</accession>
<gene>
    <name evidence="1" type="primary">hldE</name>
    <name type="ordered locus">SeSA_A3390</name>
</gene>
<evidence type="ECO:0000255" key="1">
    <source>
        <dbReference type="HAMAP-Rule" id="MF_01603"/>
    </source>
</evidence>
<keyword id="KW-0067">ATP-binding</keyword>
<keyword id="KW-0119">Carbohydrate metabolism</keyword>
<keyword id="KW-0418">Kinase</keyword>
<keyword id="KW-0511">Multifunctional enzyme</keyword>
<keyword id="KW-0547">Nucleotide-binding</keyword>
<keyword id="KW-0548">Nucleotidyltransferase</keyword>
<keyword id="KW-0808">Transferase</keyword>
<organism>
    <name type="scientific">Salmonella schwarzengrund (strain CVM19633)</name>
    <dbReference type="NCBI Taxonomy" id="439843"/>
    <lineage>
        <taxon>Bacteria</taxon>
        <taxon>Pseudomonadati</taxon>
        <taxon>Pseudomonadota</taxon>
        <taxon>Gammaproteobacteria</taxon>
        <taxon>Enterobacterales</taxon>
        <taxon>Enterobacteriaceae</taxon>
        <taxon>Salmonella</taxon>
    </lineage>
</organism>
<protein>
    <recommendedName>
        <fullName evidence="1">Bifunctional protein HldE</fullName>
    </recommendedName>
    <domain>
        <recommendedName>
            <fullName evidence="1">D-beta-D-heptose 7-phosphate kinase</fullName>
            <ecNumber evidence="1">2.7.1.167</ecNumber>
        </recommendedName>
        <alternativeName>
            <fullName evidence="1">D-beta-D-heptose 7-phosphotransferase</fullName>
        </alternativeName>
        <alternativeName>
            <fullName evidence="1">D-glycero-beta-D-manno-heptose-7-phosphate kinase</fullName>
        </alternativeName>
    </domain>
    <domain>
        <recommendedName>
            <fullName evidence="1">D-beta-D-heptose 1-phosphate adenylyltransferase</fullName>
            <ecNumber evidence="1">2.7.7.70</ecNumber>
        </recommendedName>
        <alternativeName>
            <fullName evidence="1">D-glycero-beta-D-manno-heptose 1-phosphate adenylyltransferase</fullName>
        </alternativeName>
    </domain>
</protein>
<feature type="chain" id="PRO_1000185823" description="Bifunctional protein HldE">
    <location>
        <begin position="1"/>
        <end position="477"/>
    </location>
</feature>
<feature type="region of interest" description="Ribokinase">
    <location>
        <begin position="1"/>
        <end position="318"/>
    </location>
</feature>
<feature type="region of interest" description="Cytidylyltransferase">
    <location>
        <begin position="344"/>
        <end position="477"/>
    </location>
</feature>
<feature type="active site" evidence="1">
    <location>
        <position position="264"/>
    </location>
</feature>
<feature type="binding site" evidence="1">
    <location>
        <begin position="195"/>
        <end position="198"/>
    </location>
    <ligand>
        <name>ATP</name>
        <dbReference type="ChEBI" id="CHEBI:30616"/>
    </ligand>
</feature>